<sequence length="913" mass="97262">MKKRIDYLSNKQNKYSIRRFTVGTTSVIVGATILFGIGNHQAQASEQSNDTTQSSKNNASADSEKNNMIETPQLNTTANDTSDISANTNSANVDSTTKPMSTQTSNTTTTEPASTNETPQPTAIKNQATAAKMQDQTVPQEANSQVDNKTTNDANSIATNSELKNSQTLDLPQSSPQTISNAQGTSKPSVRTRAVRSLAVAEPVVNAADAKGTNVNDKVTASNFKLEKTTFDPNQSGNTFMAANFTVTDKVKSGDYFTAKLPDSLTGNGDVDYSNSNNTMPIADIKSTNGDVVAKATYDILTKTYTFVFTDYVNNKENINGQFSLPLFTDRAKAPKSGTYDANINIADEMFNNKITYNYSSPIAGIDKPNGANISSQIIGVDTASGQNTYKQTVFVNPKQRVLGNTWVYIKGYQDKIEESSGKVSATDTKLRIFEVNDTSKLSDSYYADPNDSNLKEVTDQFKNRIYYEHPNVASIKFGDITKTYVVLVEGHYDNTGKNLKTQVIQENVDPVTNRDYSIFGWNNENVVRYGGGSADGDSAVNPKDPTPGPPVDPEPSPDPEPEPTPDPEPSPDPEPEPSPDPDPDSDSDSDSGSDSDSGSDSDSESDSDSDSDSDSDSDSDSESDSDSESDSDSDSDSDSDSDSDSDSDSDSDSDSDSDSDSDSESDSDSESDSESDSDSDSDSDSDSDSDSDSDSDSDSDSDSDSDSDSDSDSDSDSDSDSDSDSDSDSDSDSDSDSDSDSDSDSDSDSDSDSDSDSDSDSDSDSDSDSDSDSDSDSDSDSDSDSDSDSDSDSDSDSDSDSDSDSDSDSDSDSDSDSDSDSDSDSDSDSDSDSDSDSDSRVTPPNNEQKAPSNPKGEVNHSNKVSKQHKTDALPETGDKSENTNATLFGAMMALLGSLLLFRKRKQDHKEKA</sequence>
<gene>
    <name type="primary">clfB</name>
    <name type="ordered locus">NWMN_2529</name>
</gene>
<proteinExistence type="evidence at protein level"/>
<evidence type="ECO:0000250" key="1">
    <source>
        <dbReference type="UniProtKB" id="Q2FUY2"/>
    </source>
</evidence>
<evidence type="ECO:0000255" key="2"/>
<evidence type="ECO:0000255" key="3">
    <source>
        <dbReference type="PROSITE-ProRule" id="PRU00477"/>
    </source>
</evidence>
<evidence type="ECO:0000256" key="4">
    <source>
        <dbReference type="SAM" id="MobiDB-lite"/>
    </source>
</evidence>
<evidence type="ECO:0000269" key="5">
    <source>
    </source>
</evidence>
<evidence type="ECO:0000269" key="6">
    <source>
    </source>
</evidence>
<evidence type="ECO:0000269" key="7">
    <source>
    </source>
</evidence>
<evidence type="ECO:0000269" key="8">
    <source>
    </source>
</evidence>
<evidence type="ECO:0000269" key="9">
    <source>
    </source>
</evidence>
<evidence type="ECO:0000305" key="10"/>
<evidence type="ECO:0000305" key="11">
    <source>
    </source>
</evidence>
<dbReference type="EMBL" id="AJ224764">
    <property type="protein sequence ID" value="CAA12115.1"/>
    <property type="molecule type" value="Genomic_DNA"/>
</dbReference>
<dbReference type="EMBL" id="AP009351">
    <property type="protein sequence ID" value="BAF68801.1"/>
    <property type="molecule type" value="Genomic_DNA"/>
</dbReference>
<dbReference type="RefSeq" id="WP_000745871.1">
    <property type="nucleotide sequence ID" value="NZ_JBBIAE010000005.1"/>
</dbReference>
<dbReference type="SMR" id="O86476"/>
<dbReference type="KEGG" id="sae:NWMN_2529"/>
<dbReference type="HOGENOM" id="CLU_004137_2_0_9"/>
<dbReference type="PRO" id="PR:O86476"/>
<dbReference type="Proteomes" id="UP000006386">
    <property type="component" value="Chromosome"/>
</dbReference>
<dbReference type="GO" id="GO:0005576">
    <property type="term" value="C:extracellular region"/>
    <property type="evidence" value="ECO:0007669"/>
    <property type="project" value="UniProtKB-KW"/>
</dbReference>
<dbReference type="GO" id="GO:0007155">
    <property type="term" value="P:cell adhesion"/>
    <property type="evidence" value="ECO:0007669"/>
    <property type="project" value="InterPro"/>
</dbReference>
<dbReference type="Gene3D" id="2.60.40.1280">
    <property type="match status" value="1"/>
</dbReference>
<dbReference type="Gene3D" id="2.60.40.1290">
    <property type="match status" value="1"/>
</dbReference>
<dbReference type="InterPro" id="IPR011266">
    <property type="entry name" value="Adhesin_Fg-bd_dom_2"/>
</dbReference>
<dbReference type="InterPro" id="IPR008966">
    <property type="entry name" value="Adhesion_dom_sf"/>
</dbReference>
<dbReference type="InterPro" id="IPR011252">
    <property type="entry name" value="Fibrogen-bd_dom1"/>
</dbReference>
<dbReference type="InterPro" id="IPR019931">
    <property type="entry name" value="LPXTG_anchor"/>
</dbReference>
<dbReference type="InterPro" id="IPR050972">
    <property type="entry name" value="SDr-like"/>
</dbReference>
<dbReference type="InterPro" id="IPR041171">
    <property type="entry name" value="SDR_Ig"/>
</dbReference>
<dbReference type="InterPro" id="IPR005877">
    <property type="entry name" value="YSIRK_signal_dom"/>
</dbReference>
<dbReference type="NCBIfam" id="TIGR01167">
    <property type="entry name" value="LPXTG_anchor"/>
    <property type="match status" value="1"/>
</dbReference>
<dbReference type="NCBIfam" id="NF033845">
    <property type="entry name" value="MSCRAMM_ClfB"/>
    <property type="match status" value="1"/>
</dbReference>
<dbReference type="NCBIfam" id="TIGR01168">
    <property type="entry name" value="YSIRK_signal"/>
    <property type="match status" value="1"/>
</dbReference>
<dbReference type="PANTHER" id="PTHR34403">
    <property type="entry name" value="TOL-PAL SYSTEM PROTEIN TOLA"/>
    <property type="match status" value="1"/>
</dbReference>
<dbReference type="PANTHER" id="PTHR34403:SF8">
    <property type="entry name" value="TOL-PAL SYSTEM PROTEIN TOLA"/>
    <property type="match status" value="1"/>
</dbReference>
<dbReference type="Pfam" id="PF17961">
    <property type="entry name" value="Big_8"/>
    <property type="match status" value="1"/>
</dbReference>
<dbReference type="Pfam" id="PF00746">
    <property type="entry name" value="Gram_pos_anchor"/>
    <property type="match status" value="1"/>
</dbReference>
<dbReference type="Pfam" id="PF10425">
    <property type="entry name" value="SdrG_C_C"/>
    <property type="match status" value="1"/>
</dbReference>
<dbReference type="Pfam" id="PF04650">
    <property type="entry name" value="YSIRK_signal"/>
    <property type="match status" value="1"/>
</dbReference>
<dbReference type="SUPFAM" id="SSF49401">
    <property type="entry name" value="Bacterial adhesins"/>
    <property type="match status" value="2"/>
</dbReference>
<dbReference type="PROSITE" id="PS50847">
    <property type="entry name" value="GRAM_POS_ANCHORING"/>
    <property type="match status" value="1"/>
</dbReference>
<protein>
    <recommendedName>
        <fullName>Clumping factor B</fullName>
    </recommendedName>
    <alternativeName>
        <fullName>Fibrinogen receptor B</fullName>
    </alternativeName>
    <alternativeName>
        <fullName>Fibrinogen-binding protein B</fullName>
    </alternativeName>
</protein>
<accession>O86476</accession>
<accession>A6QKB9</accession>
<reference key="1">
    <citation type="journal article" date="1998" name="Mol. Microbiol.">
        <title>Clumping factor B (ClfB), a new surface-located fibrinogen-binding adhesin of Staphylococcus aureus.</title>
        <authorList>
            <person name="Ni Eidhin D."/>
            <person name="Perkins S."/>
            <person name="Francois P."/>
            <person name="Vaudaux P."/>
            <person name="Hoeoek M."/>
            <person name="Foster T.J."/>
        </authorList>
    </citation>
    <scope>NUCLEOTIDE SEQUENCE [GENOMIC DNA]</scope>
    <scope>FUNCTION</scope>
    <scope>SUBCELLULAR LOCATION</scope>
    <scope>INDUCTION</scope>
</reference>
<reference key="2">
    <citation type="journal article" date="2008" name="J. Bacteriol.">
        <title>Genome sequence of Staphylococcus aureus strain Newman and comparative analysis of staphylococcal genomes: polymorphism and evolution of two major pathogenicity islands.</title>
        <authorList>
            <person name="Baba T."/>
            <person name="Bae T."/>
            <person name="Schneewind O."/>
            <person name="Takeuchi F."/>
            <person name="Hiramatsu K."/>
        </authorList>
    </citation>
    <scope>NUCLEOTIDE SEQUENCE [LARGE SCALE GENOMIC DNA]</scope>
    <source>
        <strain>Newman</strain>
    </source>
</reference>
<reference key="3">
    <citation type="journal article" date="2001" name="J. Biol. Chem.">
        <title>Loss of clumping factor B fibrinogen binding activity by Staphylococcus aureus involves cessation of transcription, shedding and cleavage by metalloprotease.</title>
        <authorList>
            <person name="McAleese F.M."/>
            <person name="Walsh E.J."/>
            <person name="Sieprawska M."/>
            <person name="Potempa J."/>
            <person name="Foster T.J."/>
        </authorList>
    </citation>
    <scope>CLEAVAGE BY AUREOLYSIN</scope>
</reference>
<reference key="4">
    <citation type="journal article" date="2002" name="Cell. Microbiol.">
        <title>Staphylococcus aureus clumping factor B (ClfB) promotes adherence to human type I cytokeratin 10: implications for nasal colonization.</title>
        <authorList>
            <person name="O'Brien L.M."/>
            <person name="Walsh E.J."/>
            <person name="Massey R.C."/>
            <person name="Peacock S.J."/>
            <person name="Foster T.J."/>
        </authorList>
    </citation>
    <scope>FUNCTION</scope>
</reference>
<reference key="5">
    <citation type="journal article" date="2002" name="Mol. Microbiol.">
        <title>Multiple mechanisms for the activation of human platelet aggregation by Staphylococcus aureus: roles for the clumping factors clfA and clfB, the serine-aspartate repeat protein sdrE and protein A.</title>
        <authorList>
            <person name="O'Brien L.M."/>
            <person name="Kerrigan S.W."/>
            <person name="Kaw G."/>
            <person name="Hogan M."/>
            <person name="Penades J."/>
            <person name="Litt D."/>
            <person name="Fitzgerald D.J."/>
            <person name="Foster T.J."/>
            <person name="Cox D."/>
        </authorList>
    </citation>
    <scope>FUNCTION</scope>
    <scope>INDUCTION</scope>
</reference>
<reference key="6">
    <citation type="journal article" date="2004" name="J. Biol. Chem.">
        <title>Clumping factor B, a fibrinogen-binding MSCRAMM (microbial surface components recognizing adhesive matrix molecules) adhesin of Staphylococcus aureus, also binds to the tail region of type I cytokeratin 10.</title>
        <authorList>
            <person name="Walsh E.J."/>
            <person name="O'Brien L.M."/>
            <person name="Liang X."/>
            <person name="Hoeoek M."/>
            <person name="Foster T.J."/>
        </authorList>
    </citation>
    <scope>FUNCTION</scope>
</reference>
<reference key="7">
    <citation type="journal article" date="1999" name="Acta Crystallogr. D">
        <title>Crystallization of ClfA and ClfB fragments: the fibrinogen-binding surface proteins of Staphylococcus aureus.</title>
        <authorList>
            <person name="Deivanayagam C.C.S."/>
            <person name="Perkins S."/>
            <person name="Danthuluri S."/>
            <person name="Owens R.T."/>
            <person name="Bice T."/>
            <person name="Nanavathy T."/>
            <person name="Foster T.J."/>
            <person name="Hoeoek M."/>
            <person name="Narayana S.V.L."/>
        </authorList>
    </citation>
    <scope>CRYSTALLIZATION</scope>
</reference>
<organism>
    <name type="scientific">Staphylococcus aureus (strain Newman)</name>
    <dbReference type="NCBI Taxonomy" id="426430"/>
    <lineage>
        <taxon>Bacteria</taxon>
        <taxon>Bacillati</taxon>
        <taxon>Bacillota</taxon>
        <taxon>Bacilli</taxon>
        <taxon>Bacillales</taxon>
        <taxon>Staphylococcaceae</taxon>
        <taxon>Staphylococcus</taxon>
    </lineage>
</organism>
<feature type="signal peptide" evidence="2">
    <location>
        <begin position="1"/>
        <end position="44"/>
    </location>
</feature>
<feature type="chain" id="PRO_0000042004" description="Clumping factor B">
    <location>
        <begin position="45"/>
        <end position="877"/>
    </location>
</feature>
<feature type="propeptide" id="PRO_0000042005" description="Removed by sortase" evidence="3">
    <location>
        <begin position="878"/>
        <end position="913"/>
    </location>
</feature>
<feature type="region of interest" description="Disordered" evidence="4">
    <location>
        <begin position="44"/>
        <end position="192"/>
    </location>
</feature>
<feature type="region of interest" description="Ligand binding A region">
    <location>
        <begin position="45"/>
        <end position="542"/>
    </location>
</feature>
<feature type="region of interest" description="Disordered" evidence="4">
    <location>
        <begin position="530"/>
        <end position="885"/>
    </location>
</feature>
<feature type="short sequence motif" description="YSIRK-G/S signaling motif" evidence="1">
    <location>
        <begin position="15"/>
        <end position="26"/>
    </location>
</feature>
<feature type="short sequence motif" description="MIDAS-like motif">
    <location>
        <begin position="272"/>
        <end position="276"/>
    </location>
</feature>
<feature type="short sequence motif" description="LPXTG sorting signal" evidence="3">
    <location>
        <begin position="874"/>
        <end position="878"/>
    </location>
</feature>
<feature type="compositionally biased region" description="Polar residues" evidence="4">
    <location>
        <begin position="44"/>
        <end position="61"/>
    </location>
</feature>
<feature type="compositionally biased region" description="Polar residues" evidence="4">
    <location>
        <begin position="68"/>
        <end position="95"/>
    </location>
</feature>
<feature type="compositionally biased region" description="Low complexity" evidence="4">
    <location>
        <begin position="96"/>
        <end position="119"/>
    </location>
</feature>
<feature type="compositionally biased region" description="Polar residues" evidence="4">
    <location>
        <begin position="120"/>
        <end position="189"/>
    </location>
</feature>
<feature type="compositionally biased region" description="Pro residues" evidence="4">
    <location>
        <begin position="545"/>
        <end position="555"/>
    </location>
</feature>
<feature type="compositionally biased region" description="Acidic residues" evidence="4">
    <location>
        <begin position="556"/>
        <end position="837"/>
    </location>
</feature>
<feature type="compositionally biased region" description="Polar residues" evidence="4">
    <location>
        <begin position="841"/>
        <end position="852"/>
    </location>
</feature>
<feature type="compositionally biased region" description="Basic and acidic residues" evidence="4">
    <location>
        <begin position="869"/>
        <end position="882"/>
    </location>
</feature>
<feature type="site" description="Cleavage; by aureolysin">
    <location>
        <begin position="197"/>
        <end position="198"/>
    </location>
</feature>
<feature type="site" description="Cleavage; by aureolysin">
    <location>
        <begin position="199"/>
        <end position="200"/>
    </location>
</feature>
<feature type="modified residue" description="Pentaglycyl murein peptidoglycan amidated threonine" evidence="3">
    <location>
        <position position="877"/>
    </location>
</feature>
<feature type="sequence conflict" description="In Ref. 1; CAA12115." evidence="10" ref="1">
    <original>A</original>
    <variation>G</variation>
    <location>
        <position position="142"/>
    </location>
</feature>
<name>CLFB_STAAE</name>
<comment type="function">
    <text evidence="6 7 8 9">Cell surface-associated protein implicated in virulence by promoting bacterial attachment to both alpha- and beta-chains of human fibrinogen and inducing the formation of bacterial clumps. Partly responsible for mediating bacterial attachment to the highly keratinized squamous epithelial cells from the nasal cavity via an interaction with cytokeratin K10 (K10). Also promotes bacterial attachment to cultured keratinocytes, possibly through an interaction with cytokeratin K10. Binds mouse cytokeratin K10. Activates human platelet aggregation.</text>
</comment>
<comment type="subcellular location">
    <subcellularLocation>
        <location evidence="11">Secreted</location>
        <location evidence="11">Cell wall</location>
        <topology evidence="11">Peptidoglycan-anchor</topology>
    </subcellularLocation>
    <text evidence="1">Anchored to the cell wall by sortase A (By similarity).</text>
</comment>
<comment type="induction">
    <text evidence="6 9">Expressed on cells only at early exponential phase with aeration.</text>
</comment>
<comment type="domain">
    <text>The Asp/Ser-rich domain functions as a stalk to allow the ligand binding domain to be displayed in a functional form on the cell surface.</text>
</comment>
<comment type="PTM">
    <text evidence="5">Proteolytically cleaved by aureolysin (aur). This cleavage leads to the inactivation of ClfB.</text>
</comment>
<comment type="miscellaneous">
    <text>Fg-binding activity of ClfB is regulated by the divalent cations Ca(2+) and Mn(2+).</text>
</comment>
<comment type="similarity">
    <text evidence="10">Belongs to the serine-aspartate repeat-containing protein (SDr) family.</text>
</comment>
<keyword id="KW-0134">Cell wall</keyword>
<keyword id="KW-0572">Peptidoglycan-anchor</keyword>
<keyword id="KW-0964">Secreted</keyword>
<keyword id="KW-0732">Signal</keyword>
<keyword id="KW-0843">Virulence</keyword>